<organism>
    <name type="scientific">Arabidopsis lyrata</name>
    <name type="common">Lyre-leaved rock-cress</name>
    <name type="synonym">Arabis lyrata</name>
    <dbReference type="NCBI Taxonomy" id="59689"/>
    <lineage>
        <taxon>Eukaryota</taxon>
        <taxon>Viridiplantae</taxon>
        <taxon>Streptophyta</taxon>
        <taxon>Embryophyta</taxon>
        <taxon>Tracheophyta</taxon>
        <taxon>Spermatophyta</taxon>
        <taxon>Magnoliopsida</taxon>
        <taxon>eudicotyledons</taxon>
        <taxon>Gunneridae</taxon>
        <taxon>Pentapetalae</taxon>
        <taxon>rosids</taxon>
        <taxon>malvids</taxon>
        <taxon>Brassicales</taxon>
        <taxon>Brassicaceae</taxon>
        <taxon>Camelineae</taxon>
        <taxon>Arabidopsis</taxon>
    </lineage>
</organism>
<keyword id="KW-0150">Chloroplast</keyword>
<keyword id="KW-0507">mRNA processing</keyword>
<keyword id="KW-0934">Plastid</keyword>
<keyword id="KW-0694">RNA-binding</keyword>
<keyword id="KW-0819">tRNA processing</keyword>
<name>MATK_ARALY</name>
<evidence type="ECO:0000255" key="1">
    <source>
        <dbReference type="HAMAP-Rule" id="MF_01390"/>
    </source>
</evidence>
<protein>
    <recommendedName>
        <fullName evidence="1">Maturase K</fullName>
    </recommendedName>
    <alternativeName>
        <fullName evidence="1">Intron maturase</fullName>
    </alternativeName>
</protein>
<proteinExistence type="inferred from homology"/>
<comment type="function">
    <text evidence="1">Usually encoded in the trnK tRNA gene intron. Probably assists in splicing its own and other chloroplast group II introns.</text>
</comment>
<comment type="subcellular location">
    <subcellularLocation>
        <location>Plastid</location>
        <location>Chloroplast</location>
    </subcellularLocation>
</comment>
<comment type="similarity">
    <text evidence="1">Belongs to the intron maturase 2 family. MatK subfamily.</text>
</comment>
<dbReference type="EMBL" id="AF144342">
    <property type="protein sequence ID" value="AAG43311.1"/>
    <property type="molecule type" value="Genomic_DNA"/>
</dbReference>
<dbReference type="ExpressionAtlas" id="Q9GF50">
    <property type="expression patterns" value="baseline"/>
</dbReference>
<dbReference type="GO" id="GO:0009507">
    <property type="term" value="C:chloroplast"/>
    <property type="evidence" value="ECO:0007669"/>
    <property type="project" value="UniProtKB-SubCell"/>
</dbReference>
<dbReference type="GO" id="GO:0003723">
    <property type="term" value="F:RNA binding"/>
    <property type="evidence" value="ECO:0007669"/>
    <property type="project" value="UniProtKB-KW"/>
</dbReference>
<dbReference type="GO" id="GO:0006397">
    <property type="term" value="P:mRNA processing"/>
    <property type="evidence" value="ECO:0007669"/>
    <property type="project" value="UniProtKB-KW"/>
</dbReference>
<dbReference type="GO" id="GO:0008380">
    <property type="term" value="P:RNA splicing"/>
    <property type="evidence" value="ECO:0007669"/>
    <property type="project" value="UniProtKB-UniRule"/>
</dbReference>
<dbReference type="GO" id="GO:0008033">
    <property type="term" value="P:tRNA processing"/>
    <property type="evidence" value="ECO:0007669"/>
    <property type="project" value="UniProtKB-KW"/>
</dbReference>
<dbReference type="HAMAP" id="MF_01390">
    <property type="entry name" value="MatK"/>
    <property type="match status" value="1"/>
</dbReference>
<dbReference type="InterPro" id="IPR024937">
    <property type="entry name" value="Domain_X"/>
</dbReference>
<dbReference type="InterPro" id="IPR002866">
    <property type="entry name" value="Maturase_MatK"/>
</dbReference>
<dbReference type="InterPro" id="IPR024942">
    <property type="entry name" value="Maturase_MatK_N"/>
</dbReference>
<dbReference type="PANTHER" id="PTHR34811">
    <property type="entry name" value="MATURASE K"/>
    <property type="match status" value="1"/>
</dbReference>
<dbReference type="PANTHER" id="PTHR34811:SF1">
    <property type="entry name" value="MATURASE K"/>
    <property type="match status" value="1"/>
</dbReference>
<dbReference type="Pfam" id="PF01348">
    <property type="entry name" value="Intron_maturas2"/>
    <property type="match status" value="1"/>
</dbReference>
<dbReference type="Pfam" id="PF01824">
    <property type="entry name" value="MatK_N"/>
    <property type="match status" value="1"/>
</dbReference>
<gene>
    <name evidence="1" type="primary">matK</name>
</gene>
<reference key="1">
    <citation type="submission" date="1999-04" db="EMBL/GenBank/DDBJ databases">
        <title>Evolutionary analysis of plastidic maturase K and nuclear chalcone synthase and their utility for phylogenetic reconstructions within the Brassicaceae.</title>
        <authorList>
            <person name="Koch M."/>
            <person name="Mitchell-Olds T."/>
        </authorList>
    </citation>
    <scope>NUCLEOTIDE SEQUENCE [GENOMIC DNA]</scope>
</reference>
<sequence>MEKFQGYLEFDGARQQSFLYPLFFREYIYVLAYDHGLNRLNRNRSIFLENTDYDKKYSSLIVKRLILRMYEQNRLIIPTKDLNQNSFLGHTSLFYYQMISVLFAVIVEIPFSLRLGSSFQGKQFKKSYNLQSIHSIFPFLEDKLAHFNYVLDVLIPYPIHLEILVQILRYWVKDASSLHFFRFCLYEYCNCKNFYIKKKSILNPRFFLFLYNSHVCEYESIFFFLRKRSSHLRSPSYEVLFERIFFYGKIQDFFKVFVNNFPAILGLLKDPFIHYVRYHGRCILATKDTPLLMNKWKYFFVNLWQCYFSVWFQSQKVNINQLSKDNLEFLGYLSSLRLNPLVVRSQMLENSFLIDNVRIKLDSKIPISSIIGSLAKDKFCNVLGHPISKATWTDSSDSDILNRFVRICRNISHYYSGSSKKKNLYRIKYILRLCCVKTLARKHKSTVRAFLKRLGSVLLEEFLTGEDQVLSLIFPRSYYASKRLYRVRIWYLDILYLNDLVNHE</sequence>
<geneLocation type="chloroplast"/>
<feature type="chain" id="PRO_0000143245" description="Maturase K">
    <location>
        <begin position="1"/>
        <end position="504"/>
    </location>
</feature>
<accession>Q9GF50</accession>